<feature type="chain" id="PRO_0000400398" description="ATP-dependent zinc metalloprotease FtsH">
    <location>
        <begin position="1"/>
        <end position="727"/>
    </location>
</feature>
<feature type="topological domain" description="Cytoplasmic" evidence="1">
    <location>
        <begin position="1"/>
        <end position="6"/>
    </location>
</feature>
<feature type="transmembrane region" description="Helical" evidence="1">
    <location>
        <begin position="7"/>
        <end position="27"/>
    </location>
</feature>
<feature type="topological domain" description="Extracellular" evidence="1">
    <location>
        <begin position="28"/>
        <end position="110"/>
    </location>
</feature>
<feature type="transmembrane region" description="Helical" evidence="1">
    <location>
        <begin position="111"/>
        <end position="131"/>
    </location>
</feature>
<feature type="topological domain" description="Cytoplasmic" evidence="1">
    <location>
        <begin position="132"/>
        <end position="727"/>
    </location>
</feature>
<feature type="region of interest" description="Disordered" evidence="2">
    <location>
        <begin position="645"/>
        <end position="727"/>
    </location>
</feature>
<feature type="compositionally biased region" description="Basic and acidic residues" evidence="2">
    <location>
        <begin position="645"/>
        <end position="684"/>
    </location>
</feature>
<feature type="compositionally biased region" description="Basic and acidic residues" evidence="2">
    <location>
        <begin position="691"/>
        <end position="706"/>
    </location>
</feature>
<feature type="compositionally biased region" description="Low complexity" evidence="2">
    <location>
        <begin position="710"/>
        <end position="727"/>
    </location>
</feature>
<feature type="active site" evidence="1">
    <location>
        <position position="428"/>
    </location>
</feature>
<feature type="binding site" evidence="1">
    <location>
        <begin position="205"/>
        <end position="212"/>
    </location>
    <ligand>
        <name>ATP</name>
        <dbReference type="ChEBI" id="CHEBI:30616"/>
    </ligand>
</feature>
<feature type="binding site" evidence="1">
    <location>
        <position position="427"/>
    </location>
    <ligand>
        <name>Zn(2+)</name>
        <dbReference type="ChEBI" id="CHEBI:29105"/>
        <note>catalytic</note>
    </ligand>
</feature>
<feature type="binding site" evidence="1">
    <location>
        <position position="431"/>
    </location>
    <ligand>
        <name>Zn(2+)</name>
        <dbReference type="ChEBI" id="CHEBI:29105"/>
        <note>catalytic</note>
    </ligand>
</feature>
<feature type="binding site" evidence="1">
    <location>
        <position position="503"/>
    </location>
    <ligand>
        <name>Zn(2+)</name>
        <dbReference type="ChEBI" id="CHEBI:29105"/>
        <note>catalytic</note>
    </ligand>
</feature>
<organism>
    <name type="scientific">Staphylococcus haemolyticus (strain JCSC1435)</name>
    <dbReference type="NCBI Taxonomy" id="279808"/>
    <lineage>
        <taxon>Bacteria</taxon>
        <taxon>Bacillati</taxon>
        <taxon>Bacillota</taxon>
        <taxon>Bacilli</taxon>
        <taxon>Bacillales</taxon>
        <taxon>Staphylococcaceae</taxon>
        <taxon>Staphylococcus</taxon>
    </lineage>
</organism>
<protein>
    <recommendedName>
        <fullName evidence="1">ATP-dependent zinc metalloprotease FtsH</fullName>
        <ecNumber evidence="1">3.4.24.-</ecNumber>
    </recommendedName>
</protein>
<dbReference type="EC" id="3.4.24.-" evidence="1"/>
<dbReference type="EMBL" id="AP006716">
    <property type="protein sequence ID" value="BAE05809.1"/>
    <property type="molecule type" value="Genomic_DNA"/>
</dbReference>
<dbReference type="RefSeq" id="WP_011276751.1">
    <property type="nucleotide sequence ID" value="NC_007168.1"/>
</dbReference>
<dbReference type="SMR" id="Q4L3G8"/>
<dbReference type="MEROPS" id="M41.009"/>
<dbReference type="GeneID" id="93781729"/>
<dbReference type="KEGG" id="sha:SH2500"/>
<dbReference type="eggNOG" id="COG0465">
    <property type="taxonomic scope" value="Bacteria"/>
</dbReference>
<dbReference type="HOGENOM" id="CLU_000688_16_0_9"/>
<dbReference type="OrthoDB" id="9809379at2"/>
<dbReference type="Proteomes" id="UP000000543">
    <property type="component" value="Chromosome"/>
</dbReference>
<dbReference type="GO" id="GO:0005886">
    <property type="term" value="C:plasma membrane"/>
    <property type="evidence" value="ECO:0007669"/>
    <property type="project" value="UniProtKB-SubCell"/>
</dbReference>
<dbReference type="GO" id="GO:0005524">
    <property type="term" value="F:ATP binding"/>
    <property type="evidence" value="ECO:0007669"/>
    <property type="project" value="UniProtKB-UniRule"/>
</dbReference>
<dbReference type="GO" id="GO:0016887">
    <property type="term" value="F:ATP hydrolysis activity"/>
    <property type="evidence" value="ECO:0007669"/>
    <property type="project" value="UniProtKB-UniRule"/>
</dbReference>
<dbReference type="GO" id="GO:0004176">
    <property type="term" value="F:ATP-dependent peptidase activity"/>
    <property type="evidence" value="ECO:0007669"/>
    <property type="project" value="InterPro"/>
</dbReference>
<dbReference type="GO" id="GO:0004222">
    <property type="term" value="F:metalloendopeptidase activity"/>
    <property type="evidence" value="ECO:0007669"/>
    <property type="project" value="InterPro"/>
</dbReference>
<dbReference type="GO" id="GO:0008270">
    <property type="term" value="F:zinc ion binding"/>
    <property type="evidence" value="ECO:0007669"/>
    <property type="project" value="UniProtKB-UniRule"/>
</dbReference>
<dbReference type="GO" id="GO:0030163">
    <property type="term" value="P:protein catabolic process"/>
    <property type="evidence" value="ECO:0007669"/>
    <property type="project" value="UniProtKB-UniRule"/>
</dbReference>
<dbReference type="GO" id="GO:0006508">
    <property type="term" value="P:proteolysis"/>
    <property type="evidence" value="ECO:0007669"/>
    <property type="project" value="UniProtKB-KW"/>
</dbReference>
<dbReference type="CDD" id="cd19501">
    <property type="entry name" value="RecA-like_FtsH"/>
    <property type="match status" value="1"/>
</dbReference>
<dbReference type="FunFam" id="1.10.8.60:FF:000001">
    <property type="entry name" value="ATP-dependent zinc metalloprotease FtsH"/>
    <property type="match status" value="1"/>
</dbReference>
<dbReference type="FunFam" id="1.20.58.760:FF:000001">
    <property type="entry name" value="ATP-dependent zinc metalloprotease FtsH"/>
    <property type="match status" value="1"/>
</dbReference>
<dbReference type="FunFam" id="3.40.50.300:FF:000001">
    <property type="entry name" value="ATP-dependent zinc metalloprotease FtsH"/>
    <property type="match status" value="1"/>
</dbReference>
<dbReference type="Gene3D" id="1.10.8.60">
    <property type="match status" value="1"/>
</dbReference>
<dbReference type="Gene3D" id="3.40.50.300">
    <property type="entry name" value="P-loop containing nucleotide triphosphate hydrolases"/>
    <property type="match status" value="1"/>
</dbReference>
<dbReference type="Gene3D" id="1.20.58.760">
    <property type="entry name" value="Peptidase M41"/>
    <property type="match status" value="1"/>
</dbReference>
<dbReference type="HAMAP" id="MF_01458">
    <property type="entry name" value="FtsH"/>
    <property type="match status" value="1"/>
</dbReference>
<dbReference type="InterPro" id="IPR003593">
    <property type="entry name" value="AAA+_ATPase"/>
</dbReference>
<dbReference type="InterPro" id="IPR041569">
    <property type="entry name" value="AAA_lid_3"/>
</dbReference>
<dbReference type="InterPro" id="IPR003959">
    <property type="entry name" value="ATPase_AAA_core"/>
</dbReference>
<dbReference type="InterPro" id="IPR003960">
    <property type="entry name" value="ATPase_AAA_CS"/>
</dbReference>
<dbReference type="InterPro" id="IPR005936">
    <property type="entry name" value="FtsH"/>
</dbReference>
<dbReference type="InterPro" id="IPR027417">
    <property type="entry name" value="P-loop_NTPase"/>
</dbReference>
<dbReference type="InterPro" id="IPR011546">
    <property type="entry name" value="Pept_M41_FtsH_extracell"/>
</dbReference>
<dbReference type="InterPro" id="IPR000642">
    <property type="entry name" value="Peptidase_M41"/>
</dbReference>
<dbReference type="InterPro" id="IPR037219">
    <property type="entry name" value="Peptidase_M41-like"/>
</dbReference>
<dbReference type="NCBIfam" id="TIGR01241">
    <property type="entry name" value="FtsH_fam"/>
    <property type="match status" value="1"/>
</dbReference>
<dbReference type="PANTHER" id="PTHR23076:SF113">
    <property type="entry name" value="ATP-DEPENDENT ZINC METALLOPROTEASE FTSH 1, CHLOROPLASTIC-RELATED"/>
    <property type="match status" value="1"/>
</dbReference>
<dbReference type="PANTHER" id="PTHR23076">
    <property type="entry name" value="METALLOPROTEASE M41 FTSH"/>
    <property type="match status" value="1"/>
</dbReference>
<dbReference type="Pfam" id="PF00004">
    <property type="entry name" value="AAA"/>
    <property type="match status" value="1"/>
</dbReference>
<dbReference type="Pfam" id="PF17862">
    <property type="entry name" value="AAA_lid_3"/>
    <property type="match status" value="1"/>
</dbReference>
<dbReference type="Pfam" id="PF06480">
    <property type="entry name" value="FtsH_ext"/>
    <property type="match status" value="1"/>
</dbReference>
<dbReference type="Pfam" id="PF01434">
    <property type="entry name" value="Peptidase_M41"/>
    <property type="match status" value="1"/>
</dbReference>
<dbReference type="SMART" id="SM00382">
    <property type="entry name" value="AAA"/>
    <property type="match status" value="1"/>
</dbReference>
<dbReference type="SUPFAM" id="SSF140990">
    <property type="entry name" value="FtsH protease domain-like"/>
    <property type="match status" value="1"/>
</dbReference>
<dbReference type="SUPFAM" id="SSF52540">
    <property type="entry name" value="P-loop containing nucleoside triphosphate hydrolases"/>
    <property type="match status" value="1"/>
</dbReference>
<dbReference type="PROSITE" id="PS00674">
    <property type="entry name" value="AAA"/>
    <property type="match status" value="1"/>
</dbReference>
<proteinExistence type="inferred from homology"/>
<sequence>MQKAFRNVLVIAIIGVIIFGVFSYINGNGNTPKQLSYSQFVEKLDKGDLKTLEIQPEQNVYLVSGKTKNDEDYSSTILYNNEKDLQKITNEAKSQKGLDFKVKEEEKQSVFVSMLTTLIPVLIIAFLFIFFLSQAQGGGGGGRMMNFGKSKAKMYDNQKRRVRFSDVAGADEEKQELIEIVDFLKDNKKFKQMGSRIPKGVLLVGPPGTGKTLLARAVAGEAGAPFFSISGSDFVEMFVGVGASRVRDLFENAKKNAPCIIFIDEIDAVGRQRGAGVGGGHDEREQTLNQLLVEMDGFGENEGIIMIAATNRPDILDPALLRPGRFDRQIQVGRPDVKGREAILHVHSKNKPLDETVDLKAISQRTPGFSGADLENLLNEASLIAAREGKNKIDMRDIEEATDRVIAGPAKKSRVISDKERNIVAHHEAGHTVIGMVLDEAEVVHKVTIVPRGQAGGYAMMLPKQDRFLMTEPELLDKICGLLGGRVSEDINFHEVSTGASNDFERATQIARSMVTEYGMSKKLGPLQFSSSGGGQVFLGKDMQGEPNYSGQIAYEIDKEVQRIIKEQYERCKQILLDHEKELKLIAKTLLTEETLVAEQIRSLFYDGVLPEVDYDAARVVKDEDSDYSEGKYGKSYDDIREEQLEEGKEDMREDRKEDNDMNRERRHRQRDDRDNQTGHDQLRDGSNGDNDQHRGHSNNEEDTGHEQSPNIDKPYNPNDPNNPSNR</sequence>
<comment type="function">
    <text evidence="1">Acts as a processive, ATP-dependent zinc metallopeptidase for both cytoplasmic and membrane proteins. Plays a role in the quality control of integral membrane proteins.</text>
</comment>
<comment type="cofactor">
    <cofactor evidence="1">
        <name>Zn(2+)</name>
        <dbReference type="ChEBI" id="CHEBI:29105"/>
    </cofactor>
    <text evidence="1">Binds 1 zinc ion per subunit.</text>
</comment>
<comment type="subunit">
    <text evidence="1">Homohexamer.</text>
</comment>
<comment type="subcellular location">
    <subcellularLocation>
        <location evidence="1">Cell membrane</location>
        <topology evidence="1">Multi-pass membrane protein</topology>
        <orientation evidence="1">Cytoplasmic side</orientation>
    </subcellularLocation>
</comment>
<comment type="similarity">
    <text evidence="1">In the central section; belongs to the AAA ATPase family.</text>
</comment>
<comment type="similarity">
    <text evidence="1">In the C-terminal section; belongs to the peptidase M41 family.</text>
</comment>
<accession>Q4L3G8</accession>
<name>FTSH_STAHJ</name>
<reference key="1">
    <citation type="journal article" date="2005" name="J. Bacteriol.">
        <title>Whole-genome sequencing of Staphylococcus haemolyticus uncovers the extreme plasticity of its genome and the evolution of human-colonizing staphylococcal species.</title>
        <authorList>
            <person name="Takeuchi F."/>
            <person name="Watanabe S."/>
            <person name="Baba T."/>
            <person name="Yuzawa H."/>
            <person name="Ito T."/>
            <person name="Morimoto Y."/>
            <person name="Kuroda M."/>
            <person name="Cui L."/>
            <person name="Takahashi M."/>
            <person name="Ankai A."/>
            <person name="Baba S."/>
            <person name="Fukui S."/>
            <person name="Lee J.C."/>
            <person name="Hiramatsu K."/>
        </authorList>
    </citation>
    <scope>NUCLEOTIDE SEQUENCE [LARGE SCALE GENOMIC DNA]</scope>
    <source>
        <strain>JCSC1435</strain>
    </source>
</reference>
<gene>
    <name evidence="1" type="primary">ftsH</name>
    <name type="ordered locus">SH2500</name>
</gene>
<keyword id="KW-0067">ATP-binding</keyword>
<keyword id="KW-1003">Cell membrane</keyword>
<keyword id="KW-0378">Hydrolase</keyword>
<keyword id="KW-0472">Membrane</keyword>
<keyword id="KW-0479">Metal-binding</keyword>
<keyword id="KW-0482">Metalloprotease</keyword>
<keyword id="KW-0547">Nucleotide-binding</keyword>
<keyword id="KW-0645">Protease</keyword>
<keyword id="KW-0812">Transmembrane</keyword>
<keyword id="KW-1133">Transmembrane helix</keyword>
<keyword id="KW-0862">Zinc</keyword>
<evidence type="ECO:0000255" key="1">
    <source>
        <dbReference type="HAMAP-Rule" id="MF_01458"/>
    </source>
</evidence>
<evidence type="ECO:0000256" key="2">
    <source>
        <dbReference type="SAM" id="MobiDB-lite"/>
    </source>
</evidence>